<evidence type="ECO:0000255" key="1">
    <source>
        <dbReference type="HAMAP-Rule" id="MF_01300"/>
    </source>
</evidence>
<accession>Q89M95</accession>
<proteinExistence type="inferred from homology"/>
<protein>
    <recommendedName>
        <fullName evidence="1">C4-dicarboxylate transport protein 3</fullName>
    </recommendedName>
</protein>
<gene>
    <name evidence="1" type="primary">dctA3</name>
    <name type="ordered locus">blr4298</name>
</gene>
<dbReference type="EMBL" id="BA000040">
    <property type="protein sequence ID" value="BAC49563.1"/>
    <property type="molecule type" value="Genomic_DNA"/>
</dbReference>
<dbReference type="RefSeq" id="NP_770938.1">
    <property type="nucleotide sequence ID" value="NC_004463.1"/>
</dbReference>
<dbReference type="RefSeq" id="WP_011087071.1">
    <property type="nucleotide sequence ID" value="NC_004463.1"/>
</dbReference>
<dbReference type="SMR" id="Q89M95"/>
<dbReference type="STRING" id="224911.AAV28_18550"/>
<dbReference type="EnsemblBacteria" id="BAC49563">
    <property type="protein sequence ID" value="BAC49563"/>
    <property type="gene ID" value="BAC49563"/>
</dbReference>
<dbReference type="GeneID" id="46491294"/>
<dbReference type="KEGG" id="bja:blr4298"/>
<dbReference type="PATRIC" id="fig|224911.44.peg.4039"/>
<dbReference type="eggNOG" id="COG1301">
    <property type="taxonomic scope" value="Bacteria"/>
</dbReference>
<dbReference type="HOGENOM" id="CLU_019375_7_0_5"/>
<dbReference type="InParanoid" id="Q89M95"/>
<dbReference type="OrthoDB" id="9766690at2"/>
<dbReference type="PhylomeDB" id="Q89M95"/>
<dbReference type="Proteomes" id="UP000002526">
    <property type="component" value="Chromosome"/>
</dbReference>
<dbReference type="GO" id="GO:0005886">
    <property type="term" value="C:plasma membrane"/>
    <property type="evidence" value="ECO:0000318"/>
    <property type="project" value="GO_Central"/>
</dbReference>
<dbReference type="GO" id="GO:0015138">
    <property type="term" value="F:fumarate transmembrane transporter activity"/>
    <property type="evidence" value="ECO:0000318"/>
    <property type="project" value="GO_Central"/>
</dbReference>
<dbReference type="GO" id="GO:0015366">
    <property type="term" value="F:malate:proton symporter activity"/>
    <property type="evidence" value="ECO:0000318"/>
    <property type="project" value="GO_Central"/>
</dbReference>
<dbReference type="GO" id="GO:0015141">
    <property type="term" value="F:succinate transmembrane transporter activity"/>
    <property type="evidence" value="ECO:0000318"/>
    <property type="project" value="GO_Central"/>
</dbReference>
<dbReference type="GO" id="GO:0070778">
    <property type="term" value="P:L-aspartate transmembrane transport"/>
    <property type="evidence" value="ECO:0000318"/>
    <property type="project" value="GO_Central"/>
</dbReference>
<dbReference type="FunFam" id="1.10.3860.10:FF:000001">
    <property type="entry name" value="C4-dicarboxylate transport protein"/>
    <property type="match status" value="1"/>
</dbReference>
<dbReference type="Gene3D" id="1.10.3860.10">
    <property type="entry name" value="Sodium:dicarboxylate symporter"/>
    <property type="match status" value="1"/>
</dbReference>
<dbReference type="HAMAP" id="MF_01300">
    <property type="entry name" value="C4_dicarb_transport"/>
    <property type="match status" value="1"/>
</dbReference>
<dbReference type="InterPro" id="IPR023954">
    <property type="entry name" value="C4_dicarb_transport"/>
</dbReference>
<dbReference type="InterPro" id="IPR001991">
    <property type="entry name" value="Na-dicarboxylate_symporter"/>
</dbReference>
<dbReference type="InterPro" id="IPR018107">
    <property type="entry name" value="Na-dicarboxylate_symporter_CS"/>
</dbReference>
<dbReference type="InterPro" id="IPR036458">
    <property type="entry name" value="Na:dicarbo_symporter_sf"/>
</dbReference>
<dbReference type="NCBIfam" id="NF002461">
    <property type="entry name" value="PRK01663.1"/>
    <property type="match status" value="1"/>
</dbReference>
<dbReference type="PANTHER" id="PTHR42865:SF1">
    <property type="entry name" value="AEROBIC C4-DICARBOXYLATE TRANSPORT PROTEIN"/>
    <property type="match status" value="1"/>
</dbReference>
<dbReference type="PANTHER" id="PTHR42865">
    <property type="entry name" value="PROTON/GLUTAMATE-ASPARTATE SYMPORTER"/>
    <property type="match status" value="1"/>
</dbReference>
<dbReference type="Pfam" id="PF00375">
    <property type="entry name" value="SDF"/>
    <property type="match status" value="1"/>
</dbReference>
<dbReference type="PRINTS" id="PR00173">
    <property type="entry name" value="EDTRNSPORT"/>
</dbReference>
<dbReference type="SUPFAM" id="SSF118215">
    <property type="entry name" value="Proton glutamate symport protein"/>
    <property type="match status" value="1"/>
</dbReference>
<dbReference type="PROSITE" id="PS00714">
    <property type="entry name" value="NA_DICARBOXYL_SYMP_2"/>
    <property type="match status" value="1"/>
</dbReference>
<reference key="1">
    <citation type="journal article" date="2002" name="DNA Res.">
        <title>Complete genomic sequence of nitrogen-fixing symbiotic bacterium Bradyrhizobium japonicum USDA110.</title>
        <authorList>
            <person name="Kaneko T."/>
            <person name="Nakamura Y."/>
            <person name="Sato S."/>
            <person name="Minamisawa K."/>
            <person name="Uchiumi T."/>
            <person name="Sasamoto S."/>
            <person name="Watanabe A."/>
            <person name="Idesawa K."/>
            <person name="Iriguchi M."/>
            <person name="Kawashima K."/>
            <person name="Kohara M."/>
            <person name="Matsumoto M."/>
            <person name="Shimpo S."/>
            <person name="Tsuruoka H."/>
            <person name="Wada T."/>
            <person name="Yamada M."/>
            <person name="Tabata S."/>
        </authorList>
    </citation>
    <scope>NUCLEOTIDE SEQUENCE [LARGE SCALE GENOMIC DNA]</scope>
    <source>
        <strain>JCM 10833 / BCRC 13528 / IAM 13628 / NBRC 14792 / USDA 110</strain>
    </source>
</reference>
<sequence length="444" mass="46696">MTTTTMAGTPVAPAAAKPWYKVLYVQVLIAIVLGAIVGWLWPTVATNDWIKALGDGFIKLIKMVIAPIIFCTVVSGIAHIQDAKKVGRIGVKALVYFEVVSTFALVIGLIIGNLVRPGAGFGNAAANEAAVATYAKQAAGQKSVDFVLHIIPDTVVGAFAQGEILQVLLFSVLFGFAIMSLGERGHTIRSFIDDAAHAVFGVISIVMRAAPIGAFGAMAYTIGKFGTGAILNLIGLIATFYVTAALFVFVVLGIIARLAGFSIFKFLAYIKDELLIVLGTSSSESALPSLMEKLERLGCSKSVVGLVVPTGYSFNLDGTNIYMTLATLFIAQALGFDLSFGQQLTILVVAMLTSKGASGITGAGFITLAATLAVVDPRLVPGMAIVLGIDKFMSECRALTNLCGNGVACVIVAWWEGELDRDKLNAGLSRQIDPTDMETAITTD</sequence>
<name>DCTA3_BRADU</name>
<comment type="function">
    <text evidence="1">Responsible for the transport of dicarboxylates such as succinate, fumarate, and malate from the periplasm across the membrane.</text>
</comment>
<comment type="subcellular location">
    <subcellularLocation>
        <location evidence="1">Cell inner membrane</location>
        <topology evidence="1">Multi-pass membrane protein</topology>
    </subcellularLocation>
</comment>
<comment type="similarity">
    <text evidence="1">Belongs to the dicarboxylate/amino acid:cation symporter (DAACS) (TC 2.A.23) family.</text>
</comment>
<keyword id="KW-0997">Cell inner membrane</keyword>
<keyword id="KW-1003">Cell membrane</keyword>
<keyword id="KW-0472">Membrane</keyword>
<keyword id="KW-1185">Reference proteome</keyword>
<keyword id="KW-0769">Symport</keyword>
<keyword id="KW-0812">Transmembrane</keyword>
<keyword id="KW-1133">Transmembrane helix</keyword>
<keyword id="KW-0813">Transport</keyword>
<organism>
    <name type="scientific">Bradyrhizobium diazoefficiens (strain JCM 10833 / BCRC 13528 / IAM 13628 / NBRC 14792 / USDA 110)</name>
    <dbReference type="NCBI Taxonomy" id="224911"/>
    <lineage>
        <taxon>Bacteria</taxon>
        <taxon>Pseudomonadati</taxon>
        <taxon>Pseudomonadota</taxon>
        <taxon>Alphaproteobacteria</taxon>
        <taxon>Hyphomicrobiales</taxon>
        <taxon>Nitrobacteraceae</taxon>
        <taxon>Bradyrhizobium</taxon>
    </lineage>
</organism>
<feature type="chain" id="PRO_0000321971" description="C4-dicarboxylate transport protein 3">
    <location>
        <begin position="1"/>
        <end position="444"/>
    </location>
</feature>
<feature type="transmembrane region" description="Helical" evidence="1">
    <location>
        <begin position="22"/>
        <end position="42"/>
    </location>
</feature>
<feature type="transmembrane region" description="Helical" evidence="1">
    <location>
        <begin position="60"/>
        <end position="80"/>
    </location>
</feature>
<feature type="transmembrane region" description="Helical" evidence="1">
    <location>
        <begin position="95"/>
        <end position="115"/>
    </location>
</feature>
<feature type="transmembrane region" description="Helical" evidence="1">
    <location>
        <begin position="162"/>
        <end position="182"/>
    </location>
</feature>
<feature type="transmembrane region" description="Helical" evidence="1">
    <location>
        <begin position="198"/>
        <end position="218"/>
    </location>
</feature>
<feature type="transmembrane region" description="Helical" evidence="1">
    <location>
        <begin position="236"/>
        <end position="256"/>
    </location>
</feature>
<feature type="transmembrane region" description="Helical" evidence="1">
    <location>
        <begin position="321"/>
        <end position="341"/>
    </location>
</feature>
<feature type="transmembrane region" description="Helical" evidence="1">
    <location>
        <begin position="346"/>
        <end position="366"/>
    </location>
</feature>
<feature type="transmembrane region" description="Helical" evidence="1">
    <location>
        <begin position="399"/>
        <end position="419"/>
    </location>
</feature>